<organism>
    <name type="scientific">Escherichia coli (strain K12)</name>
    <dbReference type="NCBI Taxonomy" id="83333"/>
    <lineage>
        <taxon>Bacteria</taxon>
        <taxon>Pseudomonadati</taxon>
        <taxon>Pseudomonadota</taxon>
        <taxon>Gammaproteobacteria</taxon>
        <taxon>Enterobacterales</taxon>
        <taxon>Enterobacteriaceae</taxon>
        <taxon>Escherichia</taxon>
    </lineage>
</organism>
<accession>P55914</accession>
<accession>Q2EEU5</accession>
<accession>Q2M5U8</accession>
<name>YJJZ_ECOLI</name>
<sequence>MLQRTLGSGWGVLLPGLLIAGLMYADLSSDQWRIVILMGLVLTPMMLYHKQLRHYILLPSCLALIAGIMLMIMNLNQG</sequence>
<gene>
    <name type="primary">yjjZ</name>
    <name type="ordered locus">b4567</name>
    <name type="ordered locus">JW5797</name>
</gene>
<protein>
    <recommendedName>
        <fullName>Uncharacterized protein YjjZ</fullName>
    </recommendedName>
</protein>
<keyword id="KW-1185">Reference proteome</keyword>
<reference key="1">
    <citation type="journal article" date="1995" name="Nucleic Acids Res.">
        <title>Analysis of the Escherichia coli genome VI: DNA sequence of the region from 92.8 through 100 minutes.</title>
        <authorList>
            <person name="Burland V.D."/>
            <person name="Plunkett G. III"/>
            <person name="Sofia H.J."/>
            <person name="Daniels D.L."/>
            <person name="Blattner F.R."/>
        </authorList>
    </citation>
    <scope>NUCLEOTIDE SEQUENCE [LARGE SCALE GENOMIC DNA]</scope>
    <source>
        <strain>K12 / MG1655 / ATCC 47076</strain>
    </source>
</reference>
<reference key="2">
    <citation type="journal article" date="1997" name="Science">
        <title>The complete genome sequence of Escherichia coli K-12.</title>
        <authorList>
            <person name="Blattner F.R."/>
            <person name="Plunkett G. III"/>
            <person name="Bloch C.A."/>
            <person name="Perna N.T."/>
            <person name="Burland V."/>
            <person name="Riley M."/>
            <person name="Collado-Vides J."/>
            <person name="Glasner J.D."/>
            <person name="Rode C.K."/>
            <person name="Mayhew G.F."/>
            <person name="Gregor J."/>
            <person name="Davis N.W."/>
            <person name="Kirkpatrick H.A."/>
            <person name="Goeden M.A."/>
            <person name="Rose D.J."/>
            <person name="Mau B."/>
            <person name="Shao Y."/>
        </authorList>
    </citation>
    <scope>NUCLEOTIDE SEQUENCE [LARGE SCALE GENOMIC DNA]</scope>
    <source>
        <strain>K12 / MG1655 / ATCC 47076</strain>
    </source>
</reference>
<reference key="3">
    <citation type="journal article" date="2006" name="Mol. Syst. Biol.">
        <title>Highly accurate genome sequences of Escherichia coli K-12 strains MG1655 and W3110.</title>
        <authorList>
            <person name="Hayashi K."/>
            <person name="Morooka N."/>
            <person name="Yamamoto Y."/>
            <person name="Fujita K."/>
            <person name="Isono K."/>
            <person name="Choi S."/>
            <person name="Ohtsubo E."/>
            <person name="Baba T."/>
            <person name="Wanner B.L."/>
            <person name="Mori H."/>
            <person name="Horiuchi T."/>
        </authorList>
    </citation>
    <scope>NUCLEOTIDE SEQUENCE [LARGE SCALE GENOMIC DNA]</scope>
    <source>
        <strain>K12 / W3110 / ATCC 27325 / DSM 5911</strain>
    </source>
</reference>
<reference key="4">
    <citation type="unpublished observations" date="1996-10">
        <authorList>
            <person name="Rudd K.E."/>
        </authorList>
    </citation>
    <scope>IDENTIFICATION</scope>
</reference>
<feature type="chain" id="PRO_0000169820" description="Uncharacterized protein YjjZ">
    <location>
        <begin position="1"/>
        <end position="78"/>
    </location>
</feature>
<dbReference type="EMBL" id="U14003">
    <property type="status" value="NOT_ANNOTATED_CDS"/>
    <property type="molecule type" value="Genomic_DNA"/>
</dbReference>
<dbReference type="EMBL" id="U00096">
    <property type="protein sequence ID" value="ABD18719.1"/>
    <property type="molecule type" value="Genomic_DNA"/>
</dbReference>
<dbReference type="EMBL" id="AP009048">
    <property type="protein sequence ID" value="BAE78358.1"/>
    <property type="molecule type" value="Genomic_DNA"/>
</dbReference>
<dbReference type="RefSeq" id="WP_001393508.1">
    <property type="nucleotide sequence ID" value="NZ_LN832404.1"/>
</dbReference>
<dbReference type="RefSeq" id="YP_588478.1">
    <property type="nucleotide sequence ID" value="NC_000913.3"/>
</dbReference>
<dbReference type="BioGRID" id="4261750">
    <property type="interactions" value="9"/>
</dbReference>
<dbReference type="FunCoup" id="P55914">
    <property type="interactions" value="2"/>
</dbReference>
<dbReference type="STRING" id="511145.b4567"/>
<dbReference type="PaxDb" id="511145-b4567"/>
<dbReference type="EnsemblBacteria" id="ABD18719">
    <property type="protein sequence ID" value="ABD18719"/>
    <property type="gene ID" value="b4567"/>
</dbReference>
<dbReference type="GeneID" id="1450313"/>
<dbReference type="KEGG" id="ecj:JW5797"/>
<dbReference type="KEGG" id="eco:b4567"/>
<dbReference type="PATRIC" id="fig|511145.12.peg.4515"/>
<dbReference type="EchoBASE" id="EB3132"/>
<dbReference type="eggNOG" id="ENOG5032RSY">
    <property type="taxonomic scope" value="Bacteria"/>
</dbReference>
<dbReference type="HOGENOM" id="CLU_157102_1_0_6"/>
<dbReference type="InParanoid" id="P55914"/>
<dbReference type="OMA" id="SAAMIWH"/>
<dbReference type="OrthoDB" id="6540321at2"/>
<dbReference type="PhylomeDB" id="P55914"/>
<dbReference type="BioCyc" id="EcoCyc:MONOMER0-2696"/>
<dbReference type="PRO" id="PR:P55914"/>
<dbReference type="Proteomes" id="UP000000625">
    <property type="component" value="Chromosome"/>
</dbReference>
<dbReference type="InterPro" id="IPR009885">
    <property type="entry name" value="DUF1435"/>
</dbReference>
<dbReference type="Pfam" id="PF07256">
    <property type="entry name" value="DUF1435"/>
    <property type="match status" value="1"/>
</dbReference>
<proteinExistence type="predicted"/>